<reference key="1">
    <citation type="submission" date="2006-10" db="EMBL/GenBank/DDBJ databases">
        <authorList>
            <consortium name="Sanger Xenopus tropicalis EST/cDNA project"/>
        </authorList>
    </citation>
    <scope>NUCLEOTIDE SEQUENCE [LARGE SCALE MRNA]</scope>
    <source>
        <tissue>Egg</tissue>
    </source>
</reference>
<dbReference type="EC" id="1.14.11.-" evidence="1"/>
<dbReference type="EMBL" id="CR855556">
    <property type="protein sequence ID" value="CAJ82228.1"/>
    <property type="molecule type" value="mRNA"/>
</dbReference>
<dbReference type="RefSeq" id="NP_001017304.1">
    <property type="nucleotide sequence ID" value="NM_001017304.2"/>
</dbReference>
<dbReference type="SMR" id="Q28DE6"/>
<dbReference type="FunCoup" id="Q28DE6">
    <property type="interactions" value="2291"/>
</dbReference>
<dbReference type="STRING" id="8364.ENSXETP00000051532"/>
<dbReference type="PaxDb" id="8364-ENSXETP00000042710"/>
<dbReference type="GeneID" id="550058"/>
<dbReference type="KEGG" id="xtr:550058"/>
<dbReference type="AGR" id="Xenbase:XB-GENE-5732741"/>
<dbReference type="CTD" id="222194"/>
<dbReference type="Xenbase" id="XB-GENE-5732741">
    <property type="gene designation" value="rsbn1l"/>
</dbReference>
<dbReference type="eggNOG" id="KOG4425">
    <property type="taxonomic scope" value="Eukaryota"/>
</dbReference>
<dbReference type="HOGENOM" id="CLU_009952_0_1_1"/>
<dbReference type="InParanoid" id="Q28DE6"/>
<dbReference type="OMA" id="WPAQPRI"/>
<dbReference type="OrthoDB" id="6020087at2759"/>
<dbReference type="PhylomeDB" id="Q28DE6"/>
<dbReference type="TreeFam" id="TF323256"/>
<dbReference type="Proteomes" id="UP000008143">
    <property type="component" value="Chromosome 3"/>
</dbReference>
<dbReference type="Bgee" id="ENSXETG00000019725">
    <property type="expression patterns" value="Expressed in 2-cell stage embryo and 14 other cell types or tissues"/>
</dbReference>
<dbReference type="GO" id="GO:0005634">
    <property type="term" value="C:nucleus"/>
    <property type="evidence" value="ECO:0007669"/>
    <property type="project" value="UniProtKB-SubCell"/>
</dbReference>
<dbReference type="GO" id="GO:0051213">
    <property type="term" value="F:dioxygenase activity"/>
    <property type="evidence" value="ECO:0007669"/>
    <property type="project" value="UniProtKB-KW"/>
</dbReference>
<dbReference type="GO" id="GO:0046872">
    <property type="term" value="F:metal ion binding"/>
    <property type="evidence" value="ECO:0007669"/>
    <property type="project" value="UniProtKB-KW"/>
</dbReference>
<dbReference type="InterPro" id="IPR026306">
    <property type="entry name" value="RSBN1/Dpy-21"/>
</dbReference>
<dbReference type="PANTHER" id="PTHR13354:SF9">
    <property type="entry name" value="LYSINE-SPECIFIC DEMETHYLASE RSBN1L"/>
    <property type="match status" value="1"/>
</dbReference>
<dbReference type="PANTHER" id="PTHR13354">
    <property type="entry name" value="ROUND SPERMATID BASIC PROTEIN 1"/>
    <property type="match status" value="1"/>
</dbReference>
<evidence type="ECO:0000250" key="1">
    <source>
        <dbReference type="UniProtKB" id="Q80T69"/>
    </source>
</evidence>
<evidence type="ECO:0000250" key="2">
    <source>
        <dbReference type="UniProtKB" id="Q9GRZ3"/>
    </source>
</evidence>
<evidence type="ECO:0000256" key="3">
    <source>
        <dbReference type="SAM" id="MobiDB-lite"/>
    </source>
</evidence>
<evidence type="ECO:0000305" key="4"/>
<organism>
    <name type="scientific">Xenopus tropicalis</name>
    <name type="common">Western clawed frog</name>
    <name type="synonym">Silurana tropicalis</name>
    <dbReference type="NCBI Taxonomy" id="8364"/>
    <lineage>
        <taxon>Eukaryota</taxon>
        <taxon>Metazoa</taxon>
        <taxon>Chordata</taxon>
        <taxon>Craniata</taxon>
        <taxon>Vertebrata</taxon>
        <taxon>Euteleostomi</taxon>
        <taxon>Amphibia</taxon>
        <taxon>Batrachia</taxon>
        <taxon>Anura</taxon>
        <taxon>Pipoidea</taxon>
        <taxon>Pipidae</taxon>
        <taxon>Xenopodinae</taxon>
        <taxon>Xenopus</taxon>
        <taxon>Silurana</taxon>
    </lineage>
</organism>
<accession>Q28DE6</accession>
<feature type="chain" id="PRO_0000299415" description="Lysine-specific demethylase RSBN1L">
    <location>
        <begin position="1"/>
        <end position="782"/>
    </location>
</feature>
<feature type="region of interest" description="Disordered" evidence="3">
    <location>
        <begin position="1"/>
        <end position="223"/>
    </location>
</feature>
<feature type="region of interest" description="Disordered" evidence="3">
    <location>
        <begin position="645"/>
        <end position="669"/>
    </location>
</feature>
<feature type="compositionally biased region" description="Basic and acidic residues" evidence="3">
    <location>
        <begin position="14"/>
        <end position="26"/>
    </location>
</feature>
<feature type="compositionally biased region" description="Low complexity" evidence="3">
    <location>
        <begin position="30"/>
        <end position="42"/>
    </location>
</feature>
<feature type="compositionally biased region" description="Gly residues" evidence="3">
    <location>
        <begin position="62"/>
        <end position="74"/>
    </location>
</feature>
<feature type="compositionally biased region" description="Basic and acidic residues" evidence="3">
    <location>
        <begin position="101"/>
        <end position="113"/>
    </location>
</feature>
<feature type="compositionally biased region" description="Basic and acidic residues" evidence="3">
    <location>
        <begin position="149"/>
        <end position="160"/>
    </location>
</feature>
<feature type="compositionally biased region" description="Basic and acidic residues" evidence="3">
    <location>
        <begin position="167"/>
        <end position="177"/>
    </location>
</feature>
<feature type="compositionally biased region" description="Basic and acidic residues" evidence="3">
    <location>
        <begin position="185"/>
        <end position="198"/>
    </location>
</feature>
<feature type="compositionally biased region" description="Basic residues" evidence="3">
    <location>
        <begin position="199"/>
        <end position="222"/>
    </location>
</feature>
<feature type="compositionally biased region" description="Basic and acidic residues" evidence="3">
    <location>
        <begin position="657"/>
        <end position="669"/>
    </location>
</feature>
<feature type="binding site" evidence="2">
    <location>
        <position position="515"/>
    </location>
    <ligand>
        <name>2-oxoglutarate</name>
        <dbReference type="ChEBI" id="CHEBI:16810"/>
    </ligand>
</feature>
<feature type="binding site" evidence="2">
    <location>
        <position position="518"/>
    </location>
    <ligand>
        <name>Fe cation</name>
        <dbReference type="ChEBI" id="CHEBI:24875"/>
        <note>catalytic</note>
    </ligand>
</feature>
<feature type="binding site" evidence="2">
    <location>
        <position position="520"/>
    </location>
    <ligand>
        <name>Fe cation</name>
        <dbReference type="ChEBI" id="CHEBI:24875"/>
        <note>catalytic</note>
    </ligand>
</feature>
<feature type="binding site" evidence="2">
    <location>
        <position position="612"/>
    </location>
    <ligand>
        <name>2-oxoglutarate</name>
        <dbReference type="ChEBI" id="CHEBI:16810"/>
    </ligand>
</feature>
<feature type="binding site" evidence="2">
    <location>
        <position position="620"/>
    </location>
    <ligand>
        <name>Fe cation</name>
        <dbReference type="ChEBI" id="CHEBI:24875"/>
        <note>catalytic</note>
    </ligand>
</feature>
<proteinExistence type="evidence at transcript level"/>
<gene>
    <name type="primary">rsbn1l</name>
    <name type="ORF">TEgg039d07.1</name>
</gene>
<sequence>MAELWTSIGAAPAEKQEQPPKPRDVILVKSPALLSSTSSSDLHPLKKIRTDDKCLKPKRVNGEGGGGNSKGGPGHSSSVTWSFPQGASSSSSSLCLGNPGKTEKPTKPREKRDKEKKRRREGGGEENGEVKTAGIPCLPAASPVTAVRNEIKIKDKEKQKEKKKHKLMNEIKKENGEVKLLQKGTNEKPRPNAEDLQIKKVKKKKKKKHKEGEKRKHPKMHSKSIQTICSGLVSDAENNQFKEAKVEKDVYFMGLLGKTEVKKVKVEKEIPFVSLKEPRVEHKLKCLDSLEFKHLIHIEHQPNGGASLIHAYSSELSQLSPVEMERFSEEFVTLVFSENENCAAFYVMGIVHGAATYLPDFLDYFSFNFPNSPVKMEILGKKDIETTTISNFHAQVKRTYSHGTYRAGAMRQISLVGAVDEEVGDYFPEFLDMLETSPFLKRTLPWGTCSSLQLKSRKESDDGPIMWVRPGEQMIPVADMPKSPFKRKRTTNEIKNLQYLPRASEPREMLFEDRTRAHADHIGQGFERETTAAVGVLKAVHCVEWNENPRITKDVICFHAEDFLEVVQRLQLDLHEPPLSQCVQWVDDAKLNQLRREGIRYARIQLYDDDIYFIPRNVVHQFKTVSAVCSLAWHIRLKMYHPESAATQNSDNLEETESGKETKADIERRDKTLYSSSTYTCNVQFKDPKQKPPQIKHEQTYPLQTSEECGNINLPTISPAPTECHTFETKTDYTTDTPVKNEMESTLELINQDFADRHVTPKDTRQHILTNSVIRTEEENMC</sequence>
<keyword id="KW-0223">Dioxygenase</keyword>
<keyword id="KW-0408">Iron</keyword>
<keyword id="KW-0479">Metal-binding</keyword>
<keyword id="KW-0539">Nucleus</keyword>
<keyword id="KW-0560">Oxidoreductase</keyword>
<keyword id="KW-1185">Reference proteome</keyword>
<comment type="function">
    <text evidence="1">Lysine-specific demethylase that specifically demethylates methylated lysine residues of proteins.</text>
</comment>
<comment type="cofactor">
    <cofactor evidence="1">
        <name>Fe(2+)</name>
        <dbReference type="ChEBI" id="CHEBI:29033"/>
    </cofactor>
    <text evidence="2">Binds 1 Fe(2+) ion per subunit.</text>
</comment>
<comment type="subcellular location">
    <subcellularLocation>
        <location evidence="2">Nucleus</location>
    </subcellularLocation>
</comment>
<comment type="similarity">
    <text evidence="4">Belongs to the round spermatid basic protein 1 family.</text>
</comment>
<name>RSBNL_XENTR</name>
<protein>
    <recommendedName>
        <fullName evidence="4">Lysine-specific demethylase RSBN1L</fullName>
        <ecNumber evidence="1">1.14.11.-</ecNumber>
    </recommendedName>
    <alternativeName>
        <fullName>Round spermatid basic protein 1-like</fullName>
    </alternativeName>
</protein>